<organism>
    <name type="scientific">Actinobacillus pleuropneumoniae serotype 7 (strain AP76)</name>
    <dbReference type="NCBI Taxonomy" id="537457"/>
    <lineage>
        <taxon>Bacteria</taxon>
        <taxon>Pseudomonadati</taxon>
        <taxon>Pseudomonadota</taxon>
        <taxon>Gammaproteobacteria</taxon>
        <taxon>Pasteurellales</taxon>
        <taxon>Pasteurellaceae</taxon>
        <taxon>Actinobacillus</taxon>
    </lineage>
</organism>
<accession>B3H066</accession>
<comment type="similarity">
    <text evidence="1">Belongs to the bacterial ribosomal protein bL35 family.</text>
</comment>
<protein>
    <recommendedName>
        <fullName evidence="1">Large ribosomal subunit protein bL35</fullName>
    </recommendedName>
    <alternativeName>
        <fullName evidence="3">50S ribosomal protein L35</fullName>
    </alternativeName>
</protein>
<dbReference type="EMBL" id="CP001091">
    <property type="protein sequence ID" value="ACE60878.1"/>
    <property type="molecule type" value="Genomic_DNA"/>
</dbReference>
<dbReference type="RefSeq" id="WP_005596065.1">
    <property type="nucleotide sequence ID" value="NC_010939.1"/>
</dbReference>
<dbReference type="SMR" id="B3H066"/>
<dbReference type="GeneID" id="93297699"/>
<dbReference type="KEGG" id="apa:APP7_0226"/>
<dbReference type="HOGENOM" id="CLU_169643_1_1_6"/>
<dbReference type="Proteomes" id="UP000001226">
    <property type="component" value="Chromosome"/>
</dbReference>
<dbReference type="GO" id="GO:0022625">
    <property type="term" value="C:cytosolic large ribosomal subunit"/>
    <property type="evidence" value="ECO:0007669"/>
    <property type="project" value="TreeGrafter"/>
</dbReference>
<dbReference type="GO" id="GO:0003735">
    <property type="term" value="F:structural constituent of ribosome"/>
    <property type="evidence" value="ECO:0007669"/>
    <property type="project" value="InterPro"/>
</dbReference>
<dbReference type="GO" id="GO:0006412">
    <property type="term" value="P:translation"/>
    <property type="evidence" value="ECO:0007669"/>
    <property type="project" value="UniProtKB-UniRule"/>
</dbReference>
<dbReference type="FunFam" id="4.10.410.60:FF:000001">
    <property type="entry name" value="50S ribosomal protein L35"/>
    <property type="match status" value="1"/>
</dbReference>
<dbReference type="Gene3D" id="4.10.410.60">
    <property type="match status" value="1"/>
</dbReference>
<dbReference type="HAMAP" id="MF_00514">
    <property type="entry name" value="Ribosomal_bL35"/>
    <property type="match status" value="1"/>
</dbReference>
<dbReference type="InterPro" id="IPR001706">
    <property type="entry name" value="Ribosomal_bL35"/>
</dbReference>
<dbReference type="InterPro" id="IPR021137">
    <property type="entry name" value="Ribosomal_bL35-like"/>
</dbReference>
<dbReference type="InterPro" id="IPR018265">
    <property type="entry name" value="Ribosomal_bL35_CS"/>
</dbReference>
<dbReference type="InterPro" id="IPR037229">
    <property type="entry name" value="Ribosomal_bL35_sf"/>
</dbReference>
<dbReference type="NCBIfam" id="TIGR00001">
    <property type="entry name" value="rpmI_bact"/>
    <property type="match status" value="1"/>
</dbReference>
<dbReference type="PANTHER" id="PTHR33343">
    <property type="entry name" value="54S RIBOSOMAL PROTEIN BL35M"/>
    <property type="match status" value="1"/>
</dbReference>
<dbReference type="PANTHER" id="PTHR33343:SF1">
    <property type="entry name" value="LARGE RIBOSOMAL SUBUNIT PROTEIN BL35M"/>
    <property type="match status" value="1"/>
</dbReference>
<dbReference type="Pfam" id="PF01632">
    <property type="entry name" value="Ribosomal_L35p"/>
    <property type="match status" value="1"/>
</dbReference>
<dbReference type="PRINTS" id="PR00064">
    <property type="entry name" value="RIBOSOMALL35"/>
</dbReference>
<dbReference type="SUPFAM" id="SSF143034">
    <property type="entry name" value="L35p-like"/>
    <property type="match status" value="1"/>
</dbReference>
<dbReference type="PROSITE" id="PS00936">
    <property type="entry name" value="RIBOSOMAL_L35"/>
    <property type="match status" value="1"/>
</dbReference>
<evidence type="ECO:0000255" key="1">
    <source>
        <dbReference type="HAMAP-Rule" id="MF_00514"/>
    </source>
</evidence>
<evidence type="ECO:0000256" key="2">
    <source>
        <dbReference type="SAM" id="MobiDB-lite"/>
    </source>
</evidence>
<evidence type="ECO:0000305" key="3"/>
<feature type="chain" id="PRO_1000127297" description="Large ribosomal subunit protein bL35">
    <location>
        <begin position="1"/>
        <end position="65"/>
    </location>
</feature>
<feature type="region of interest" description="Disordered" evidence="2">
    <location>
        <begin position="1"/>
        <end position="26"/>
    </location>
</feature>
<feature type="compositionally biased region" description="Basic residues" evidence="2">
    <location>
        <begin position="10"/>
        <end position="26"/>
    </location>
</feature>
<proteinExistence type="inferred from homology"/>
<gene>
    <name evidence="1" type="primary">rpmI</name>
    <name type="ordered locus">APP7_0226</name>
</gene>
<name>RL35_ACTP7</name>
<reference key="1">
    <citation type="submission" date="2008-06" db="EMBL/GenBank/DDBJ databases">
        <title>Genome and proteome analysis of A. pleuropneumoniae serotype 7.</title>
        <authorList>
            <person name="Linke B."/>
            <person name="Buettner F."/>
            <person name="Martinez-Arias R."/>
            <person name="Goesmann A."/>
            <person name="Baltes N."/>
            <person name="Tegetmeyer H."/>
            <person name="Singh M."/>
            <person name="Gerlach G.F."/>
        </authorList>
    </citation>
    <scope>NUCLEOTIDE SEQUENCE [LARGE SCALE GENOMIC DNA]</scope>
    <source>
        <strain>AP76</strain>
    </source>
</reference>
<sequence length="65" mass="7438">MPKIKTVRGAAKRFKKTASGGFKRKQSHLRHILTKKTTKRKRHLRHKSMVAKADQVLVVACLPYA</sequence>
<keyword id="KW-0687">Ribonucleoprotein</keyword>
<keyword id="KW-0689">Ribosomal protein</keyword>